<evidence type="ECO:0000255" key="1">
    <source>
        <dbReference type="HAMAP-Rule" id="MF_01366"/>
    </source>
</evidence>
<evidence type="ECO:0000305" key="2"/>
<dbReference type="EMBL" id="AE016828">
    <property type="protein sequence ID" value="AAO91243.1"/>
    <property type="molecule type" value="Genomic_DNA"/>
</dbReference>
<dbReference type="RefSeq" id="NP_820729.1">
    <property type="nucleotide sequence ID" value="NC_002971.4"/>
</dbReference>
<dbReference type="RefSeq" id="WP_005770421.1">
    <property type="nucleotide sequence ID" value="NZ_CDBG01000001.1"/>
</dbReference>
<dbReference type="SMR" id="Q83AX8"/>
<dbReference type="STRING" id="227377.CBU_1749"/>
<dbReference type="EnsemblBacteria" id="AAO91243">
    <property type="protein sequence ID" value="AAO91243"/>
    <property type="gene ID" value="CBU_1749"/>
</dbReference>
<dbReference type="GeneID" id="1209660"/>
<dbReference type="KEGG" id="cbu:CBU_1749"/>
<dbReference type="PATRIC" id="fig|227377.7.peg.1738"/>
<dbReference type="eggNOG" id="COG0102">
    <property type="taxonomic scope" value="Bacteria"/>
</dbReference>
<dbReference type="HOGENOM" id="CLU_082184_2_2_6"/>
<dbReference type="OrthoDB" id="9801330at2"/>
<dbReference type="Proteomes" id="UP000002671">
    <property type="component" value="Chromosome"/>
</dbReference>
<dbReference type="GO" id="GO:0022625">
    <property type="term" value="C:cytosolic large ribosomal subunit"/>
    <property type="evidence" value="ECO:0000318"/>
    <property type="project" value="GO_Central"/>
</dbReference>
<dbReference type="GO" id="GO:0005840">
    <property type="term" value="C:ribosome"/>
    <property type="evidence" value="ECO:0000318"/>
    <property type="project" value="GO_Central"/>
</dbReference>
<dbReference type="GO" id="GO:0003729">
    <property type="term" value="F:mRNA binding"/>
    <property type="evidence" value="ECO:0000318"/>
    <property type="project" value="GO_Central"/>
</dbReference>
<dbReference type="GO" id="GO:0003735">
    <property type="term" value="F:structural constituent of ribosome"/>
    <property type="evidence" value="ECO:0000318"/>
    <property type="project" value="GO_Central"/>
</dbReference>
<dbReference type="GO" id="GO:0017148">
    <property type="term" value="P:negative regulation of translation"/>
    <property type="evidence" value="ECO:0000318"/>
    <property type="project" value="GO_Central"/>
</dbReference>
<dbReference type="GO" id="GO:0006412">
    <property type="term" value="P:translation"/>
    <property type="evidence" value="ECO:0007669"/>
    <property type="project" value="UniProtKB-UniRule"/>
</dbReference>
<dbReference type="CDD" id="cd00392">
    <property type="entry name" value="Ribosomal_L13"/>
    <property type="match status" value="1"/>
</dbReference>
<dbReference type="FunFam" id="3.90.1180.10:FF:000001">
    <property type="entry name" value="50S ribosomal protein L13"/>
    <property type="match status" value="1"/>
</dbReference>
<dbReference type="Gene3D" id="3.90.1180.10">
    <property type="entry name" value="Ribosomal protein L13"/>
    <property type="match status" value="1"/>
</dbReference>
<dbReference type="HAMAP" id="MF_01366">
    <property type="entry name" value="Ribosomal_uL13"/>
    <property type="match status" value="1"/>
</dbReference>
<dbReference type="InterPro" id="IPR005822">
    <property type="entry name" value="Ribosomal_uL13"/>
</dbReference>
<dbReference type="InterPro" id="IPR005823">
    <property type="entry name" value="Ribosomal_uL13_bac-type"/>
</dbReference>
<dbReference type="InterPro" id="IPR023563">
    <property type="entry name" value="Ribosomal_uL13_CS"/>
</dbReference>
<dbReference type="InterPro" id="IPR036899">
    <property type="entry name" value="Ribosomal_uL13_sf"/>
</dbReference>
<dbReference type="NCBIfam" id="TIGR01066">
    <property type="entry name" value="rplM_bact"/>
    <property type="match status" value="1"/>
</dbReference>
<dbReference type="PANTHER" id="PTHR11545:SF2">
    <property type="entry name" value="LARGE RIBOSOMAL SUBUNIT PROTEIN UL13M"/>
    <property type="match status" value="1"/>
</dbReference>
<dbReference type="PANTHER" id="PTHR11545">
    <property type="entry name" value="RIBOSOMAL PROTEIN L13"/>
    <property type="match status" value="1"/>
</dbReference>
<dbReference type="Pfam" id="PF00572">
    <property type="entry name" value="Ribosomal_L13"/>
    <property type="match status" value="1"/>
</dbReference>
<dbReference type="PIRSF" id="PIRSF002181">
    <property type="entry name" value="Ribosomal_L13"/>
    <property type="match status" value="1"/>
</dbReference>
<dbReference type="SUPFAM" id="SSF52161">
    <property type="entry name" value="Ribosomal protein L13"/>
    <property type="match status" value="1"/>
</dbReference>
<dbReference type="PROSITE" id="PS00783">
    <property type="entry name" value="RIBOSOMAL_L13"/>
    <property type="match status" value="1"/>
</dbReference>
<accession>Q83AX8</accession>
<comment type="function">
    <text evidence="1">This protein is one of the early assembly proteins of the 50S ribosomal subunit, although it is not seen to bind rRNA by itself. It is important during the early stages of 50S assembly.</text>
</comment>
<comment type="subunit">
    <text evidence="1">Part of the 50S ribosomal subunit.</text>
</comment>
<comment type="similarity">
    <text evidence="1">Belongs to the universal ribosomal protein uL13 family.</text>
</comment>
<sequence length="142" mass="15811">MATYMANAKTVSPRWLLVNAEGKTLGRLASRIAAILRGKHKAEFTPHVDAGDFVVVINVDKLKVTGNKTQDKQYHHHSGYPGGLKTINFADLQAKKPQRILELAIKGMLPKGPLGRQLYRKLKIYAGDQHPHQAQQPELIDL</sequence>
<protein>
    <recommendedName>
        <fullName evidence="1">Large ribosomal subunit protein uL13</fullName>
    </recommendedName>
    <alternativeName>
        <fullName evidence="2">50S ribosomal protein L13</fullName>
    </alternativeName>
</protein>
<name>RL13_COXBU</name>
<reference key="1">
    <citation type="journal article" date="2003" name="Proc. Natl. Acad. Sci. U.S.A.">
        <title>Complete genome sequence of the Q-fever pathogen, Coxiella burnetii.</title>
        <authorList>
            <person name="Seshadri R."/>
            <person name="Paulsen I.T."/>
            <person name="Eisen J.A."/>
            <person name="Read T.D."/>
            <person name="Nelson K.E."/>
            <person name="Nelson W.C."/>
            <person name="Ward N.L."/>
            <person name="Tettelin H."/>
            <person name="Davidsen T.M."/>
            <person name="Beanan M.J."/>
            <person name="DeBoy R.T."/>
            <person name="Daugherty S.C."/>
            <person name="Brinkac L.M."/>
            <person name="Madupu R."/>
            <person name="Dodson R.J."/>
            <person name="Khouri H.M."/>
            <person name="Lee K.H."/>
            <person name="Carty H.A."/>
            <person name="Scanlan D."/>
            <person name="Heinzen R.A."/>
            <person name="Thompson H.A."/>
            <person name="Samuel J.E."/>
            <person name="Fraser C.M."/>
            <person name="Heidelberg J.F."/>
        </authorList>
    </citation>
    <scope>NUCLEOTIDE SEQUENCE [LARGE SCALE GENOMIC DNA]</scope>
    <source>
        <strain>RSA 493 / Nine Mile phase I</strain>
    </source>
</reference>
<feature type="chain" id="PRO_1000067991" description="Large ribosomal subunit protein uL13">
    <location>
        <begin position="1"/>
        <end position="142"/>
    </location>
</feature>
<organism>
    <name type="scientific">Coxiella burnetii (strain RSA 493 / Nine Mile phase I)</name>
    <dbReference type="NCBI Taxonomy" id="227377"/>
    <lineage>
        <taxon>Bacteria</taxon>
        <taxon>Pseudomonadati</taxon>
        <taxon>Pseudomonadota</taxon>
        <taxon>Gammaproteobacteria</taxon>
        <taxon>Legionellales</taxon>
        <taxon>Coxiellaceae</taxon>
        <taxon>Coxiella</taxon>
    </lineage>
</organism>
<gene>
    <name evidence="1" type="primary">rplM</name>
    <name type="ordered locus">CBU_1749</name>
</gene>
<keyword id="KW-1185">Reference proteome</keyword>
<keyword id="KW-0687">Ribonucleoprotein</keyword>
<keyword id="KW-0689">Ribosomal protein</keyword>
<proteinExistence type="inferred from homology"/>